<organism>
    <name type="scientific">Aquifex aeolicus (strain VF5)</name>
    <dbReference type="NCBI Taxonomy" id="224324"/>
    <lineage>
        <taxon>Bacteria</taxon>
        <taxon>Pseudomonadati</taxon>
        <taxon>Aquificota</taxon>
        <taxon>Aquificia</taxon>
        <taxon>Aquificales</taxon>
        <taxon>Aquificaceae</taxon>
        <taxon>Aquifex</taxon>
    </lineage>
</organism>
<protein>
    <recommendedName>
        <fullName>Uncharacterized protein aq_1978</fullName>
    </recommendedName>
</protein>
<evidence type="ECO:0000255" key="1"/>
<accession>O67787</accession>
<name>Y1978_AQUAE</name>
<reference key="1">
    <citation type="journal article" date="1998" name="Nature">
        <title>The complete genome of the hyperthermophilic bacterium Aquifex aeolicus.</title>
        <authorList>
            <person name="Deckert G."/>
            <person name="Warren P.V."/>
            <person name="Gaasterland T."/>
            <person name="Young W.G."/>
            <person name="Lenox A.L."/>
            <person name="Graham D.E."/>
            <person name="Overbeek R."/>
            <person name="Snead M.A."/>
            <person name="Keller M."/>
            <person name="Aujay M."/>
            <person name="Huber R."/>
            <person name="Feldman R.A."/>
            <person name="Short J.M."/>
            <person name="Olsen G.J."/>
            <person name="Swanson R.V."/>
        </authorList>
    </citation>
    <scope>NUCLEOTIDE SEQUENCE [LARGE SCALE GENOMIC DNA]</scope>
    <source>
        <strain>VF5</strain>
    </source>
</reference>
<keyword id="KW-1185">Reference proteome</keyword>
<feature type="chain" id="PRO_0000186961" description="Uncharacterized protein aq_1978">
    <location>
        <begin position="1"/>
        <end position="121"/>
    </location>
</feature>
<feature type="domain" description="Cupin type-2" evidence="1">
    <location>
        <begin position="47"/>
        <end position="101"/>
    </location>
</feature>
<dbReference type="EMBL" id="AE000657">
    <property type="protein sequence ID" value="AAC07756.1"/>
    <property type="molecule type" value="Genomic_DNA"/>
</dbReference>
<dbReference type="PIR" id="G70469">
    <property type="entry name" value="G70469"/>
</dbReference>
<dbReference type="RefSeq" id="NP_214356.1">
    <property type="nucleotide sequence ID" value="NC_000918.1"/>
</dbReference>
<dbReference type="RefSeq" id="WP_010881292.1">
    <property type="nucleotide sequence ID" value="NC_000918.1"/>
</dbReference>
<dbReference type="SMR" id="O67787"/>
<dbReference type="STRING" id="224324.aq_1978"/>
<dbReference type="EnsemblBacteria" id="AAC07756">
    <property type="protein sequence ID" value="AAC07756"/>
    <property type="gene ID" value="aq_1978"/>
</dbReference>
<dbReference type="KEGG" id="aae:aq_1978"/>
<dbReference type="eggNOG" id="COG1917">
    <property type="taxonomic scope" value="Bacteria"/>
</dbReference>
<dbReference type="HOGENOM" id="CLU_2033256_0_0_0"/>
<dbReference type="InParanoid" id="O67787"/>
<dbReference type="OrthoDB" id="15344at2"/>
<dbReference type="Proteomes" id="UP000000798">
    <property type="component" value="Chromosome"/>
</dbReference>
<dbReference type="Gene3D" id="2.60.120.10">
    <property type="entry name" value="Jelly Rolls"/>
    <property type="match status" value="1"/>
</dbReference>
<dbReference type="InterPro" id="IPR013096">
    <property type="entry name" value="Cupin_2"/>
</dbReference>
<dbReference type="InterPro" id="IPR052538">
    <property type="entry name" value="Flavonoid_dioxygenase-like"/>
</dbReference>
<dbReference type="InterPro" id="IPR014710">
    <property type="entry name" value="RmlC-like_jellyroll"/>
</dbReference>
<dbReference type="InterPro" id="IPR011051">
    <property type="entry name" value="RmlC_Cupin_sf"/>
</dbReference>
<dbReference type="PANTHER" id="PTHR43346">
    <property type="entry name" value="LIGAND BINDING DOMAIN PROTEIN, PUTATIVE (AFU_ORTHOLOGUE AFUA_6G14370)-RELATED"/>
    <property type="match status" value="1"/>
</dbReference>
<dbReference type="PANTHER" id="PTHR43346:SF1">
    <property type="entry name" value="QUERCETIN 2,3-DIOXYGENASE-RELATED"/>
    <property type="match status" value="1"/>
</dbReference>
<dbReference type="Pfam" id="PF07883">
    <property type="entry name" value="Cupin_2"/>
    <property type="match status" value="1"/>
</dbReference>
<dbReference type="SUPFAM" id="SSF51182">
    <property type="entry name" value="RmlC-like cupins"/>
    <property type="match status" value="1"/>
</dbReference>
<proteinExistence type="predicted"/>
<sequence length="121" mass="13882">MILFSPKEIKDIEELVKEREGSVEEIEVIKLNETPNISQFLVFIKTSEVPHYHAEHDLTFTVLKGKGELYLEGEKKKLKEGDWAFIPKGAVHFYRNTSELSVLLAIFSPSYDGKDSVRVEL</sequence>
<gene>
    <name type="ordered locus">aq_1978</name>
</gene>